<keyword id="KW-0030">Aminoacyl-tRNA synthetase</keyword>
<keyword id="KW-0067">ATP-binding</keyword>
<keyword id="KW-0963">Cytoplasm</keyword>
<keyword id="KW-0436">Ligase</keyword>
<keyword id="KW-0547">Nucleotide-binding</keyword>
<keyword id="KW-0648">Protein biosynthesis</keyword>
<keyword id="KW-1185">Reference proteome</keyword>
<accession>Q9WY60</accession>
<organism>
    <name type="scientific">Thermotoga maritima (strain ATCC 43589 / DSM 3109 / JCM 10099 / NBRC 100826 / MSB8)</name>
    <dbReference type="NCBI Taxonomy" id="243274"/>
    <lineage>
        <taxon>Bacteria</taxon>
        <taxon>Thermotogati</taxon>
        <taxon>Thermotogota</taxon>
        <taxon>Thermotogae</taxon>
        <taxon>Thermotogales</taxon>
        <taxon>Thermotogaceae</taxon>
        <taxon>Thermotoga</taxon>
    </lineage>
</organism>
<comment type="catalytic activity">
    <reaction>
        <text>tRNA(Gly) + glycine + ATP = glycyl-tRNA(Gly) + AMP + diphosphate</text>
        <dbReference type="Rhea" id="RHEA:16013"/>
        <dbReference type="Rhea" id="RHEA-COMP:9664"/>
        <dbReference type="Rhea" id="RHEA-COMP:9683"/>
        <dbReference type="ChEBI" id="CHEBI:30616"/>
        <dbReference type="ChEBI" id="CHEBI:33019"/>
        <dbReference type="ChEBI" id="CHEBI:57305"/>
        <dbReference type="ChEBI" id="CHEBI:78442"/>
        <dbReference type="ChEBI" id="CHEBI:78522"/>
        <dbReference type="ChEBI" id="CHEBI:456215"/>
        <dbReference type="EC" id="6.1.1.14"/>
    </reaction>
</comment>
<comment type="subunit">
    <text evidence="1">Tetramer of two alpha and two beta subunits.</text>
</comment>
<comment type="subcellular location">
    <subcellularLocation>
        <location evidence="1">Cytoplasm</location>
    </subcellularLocation>
</comment>
<comment type="similarity">
    <text evidence="2">Belongs to the class-II aminoacyl-tRNA synthetase family.</text>
</comment>
<name>SYGB_THEMA</name>
<feature type="chain" id="PRO_0000072934" description="Glycine--tRNA ligase beta subunit">
    <location>
        <begin position="1"/>
        <end position="672"/>
    </location>
</feature>
<proteinExistence type="inferred from homology"/>
<protein>
    <recommendedName>
        <fullName>Glycine--tRNA ligase beta subunit</fullName>
        <ecNumber>6.1.1.14</ecNumber>
    </recommendedName>
    <alternativeName>
        <fullName>Glycyl-tRNA synthetase beta subunit</fullName>
        <shortName>GlyRS</shortName>
    </alternativeName>
</protein>
<sequence length="672" mass="77813">MRTALLEVGLEELPASEFHSILKQLEEKSAELLKAYRVSSGSVEVFVGSRRFGVILKNLPERQEDFTEEKKGPPLNVAYDENGKPTRALEGFLRNNNASLENVVHREGYVYLSRVVEGKPVEEVLPDLFRDLVLGLNFRKPMRWGSGEHEYIRPVHWIVAMVDGRVLDLEIFGLRSSRISYGKRYHAGSIEIPDSERYYESLKKGFVISSHLERKKFVLEQIDEFEKRSSMKIERDEELIEEIVAITEYPRIVVGQFDRKYLELPEEIIVTAVKHHQRSFIAHKGTLTNTFVAFQDGPQPPENVVKGYERVINARLEDARYYFQKDLETPLEKMNEKLKEIVFQEKLGTLYDKVERIKKISQRLCEDLKLPGSFTQKVLEAASICKADIASKVVYEFPELQGVMGRIYALREGINEEIATAIEDHYSEEPQTVIGSILGIADRIDTIVGNFAIGNVPTSSKDPYGLKSKADTIFRIIRKNEWDISLEELLTFASSLVGYRLSEELETFFAGRFYQFLINELGISFDVARAVNHLWKKPLRGILSAEALQEISEKPEFQDLFVGFERVHNITKNHDSTKFDGALFEKEEEKKLMNKFYEVKEKVLKALERLNYREALQYLIELKPYIDEYFDNVFVMVKRDDLRVNRLSFLKNIDELFMMVGDMTYLVKRSQV</sequence>
<reference key="1">
    <citation type="journal article" date="1999" name="Nature">
        <title>Evidence for lateral gene transfer between Archaea and Bacteria from genome sequence of Thermotoga maritima.</title>
        <authorList>
            <person name="Nelson K.E."/>
            <person name="Clayton R.A."/>
            <person name="Gill S.R."/>
            <person name="Gwinn M.L."/>
            <person name="Dodson R.J."/>
            <person name="Haft D.H."/>
            <person name="Hickey E.K."/>
            <person name="Peterson J.D."/>
            <person name="Nelson W.C."/>
            <person name="Ketchum K.A."/>
            <person name="McDonald L.A."/>
            <person name="Utterback T.R."/>
            <person name="Malek J.A."/>
            <person name="Linher K.D."/>
            <person name="Garrett M.M."/>
            <person name="Stewart A.M."/>
            <person name="Cotton M.D."/>
            <person name="Pratt M.S."/>
            <person name="Phillips C.A."/>
            <person name="Richardson D.L."/>
            <person name="Heidelberg J.F."/>
            <person name="Sutton G.G."/>
            <person name="Fleischmann R.D."/>
            <person name="Eisen J.A."/>
            <person name="White O."/>
            <person name="Salzberg S.L."/>
            <person name="Smith H.O."/>
            <person name="Venter J.C."/>
            <person name="Fraser C.M."/>
        </authorList>
    </citation>
    <scope>NUCLEOTIDE SEQUENCE [LARGE SCALE GENOMIC DNA]</scope>
    <source>
        <strain>ATCC 43589 / DSM 3109 / JCM 10099 / NBRC 100826 / MSB8</strain>
    </source>
</reference>
<evidence type="ECO:0000250" key="1"/>
<evidence type="ECO:0000305" key="2"/>
<dbReference type="EC" id="6.1.1.14"/>
<dbReference type="EMBL" id="AE000512">
    <property type="protein sequence ID" value="AAD35309.1"/>
    <property type="molecule type" value="Genomic_DNA"/>
</dbReference>
<dbReference type="PIR" id="C72404">
    <property type="entry name" value="C72404"/>
</dbReference>
<dbReference type="RefSeq" id="NP_228032.1">
    <property type="nucleotide sequence ID" value="NC_000853.1"/>
</dbReference>
<dbReference type="RefSeq" id="WP_004082897.1">
    <property type="nucleotide sequence ID" value="NC_000853.1"/>
</dbReference>
<dbReference type="SMR" id="Q9WY60"/>
<dbReference type="FunCoup" id="Q9WY60">
    <property type="interactions" value="338"/>
</dbReference>
<dbReference type="STRING" id="243274.TM_0217"/>
<dbReference type="PaxDb" id="243274-THEMA_03640"/>
<dbReference type="DNASU" id="897102"/>
<dbReference type="EnsemblBacteria" id="AAD35309">
    <property type="protein sequence ID" value="AAD35309"/>
    <property type="gene ID" value="TM_0217"/>
</dbReference>
<dbReference type="KEGG" id="tma:TM0217"/>
<dbReference type="KEGG" id="tmi:THEMA_03640"/>
<dbReference type="KEGG" id="tmm:Tmari_0215"/>
<dbReference type="KEGG" id="tmw:THMA_0224"/>
<dbReference type="eggNOG" id="COG0751">
    <property type="taxonomic scope" value="Bacteria"/>
</dbReference>
<dbReference type="InParanoid" id="Q9WY60"/>
<dbReference type="OrthoDB" id="9775440at2"/>
<dbReference type="Proteomes" id="UP000008183">
    <property type="component" value="Chromosome"/>
</dbReference>
<dbReference type="GO" id="GO:0005829">
    <property type="term" value="C:cytosol"/>
    <property type="evidence" value="ECO:0000318"/>
    <property type="project" value="GO_Central"/>
</dbReference>
<dbReference type="GO" id="GO:0004814">
    <property type="term" value="F:arginine-tRNA ligase activity"/>
    <property type="evidence" value="ECO:0007669"/>
    <property type="project" value="InterPro"/>
</dbReference>
<dbReference type="GO" id="GO:0005524">
    <property type="term" value="F:ATP binding"/>
    <property type="evidence" value="ECO:0007669"/>
    <property type="project" value="UniProtKB-UniRule"/>
</dbReference>
<dbReference type="GO" id="GO:0004820">
    <property type="term" value="F:glycine-tRNA ligase activity"/>
    <property type="evidence" value="ECO:0007669"/>
    <property type="project" value="UniProtKB-UniRule"/>
</dbReference>
<dbReference type="GO" id="GO:0006420">
    <property type="term" value="P:arginyl-tRNA aminoacylation"/>
    <property type="evidence" value="ECO:0007669"/>
    <property type="project" value="InterPro"/>
</dbReference>
<dbReference type="GO" id="GO:0006426">
    <property type="term" value="P:glycyl-tRNA aminoacylation"/>
    <property type="evidence" value="ECO:0007669"/>
    <property type="project" value="UniProtKB-UniRule"/>
</dbReference>
<dbReference type="HAMAP" id="MF_00255">
    <property type="entry name" value="Gly_tRNA_synth_beta"/>
    <property type="match status" value="1"/>
</dbReference>
<dbReference type="InterPro" id="IPR008909">
    <property type="entry name" value="DALR_anticod-bd"/>
</dbReference>
<dbReference type="InterPro" id="IPR015944">
    <property type="entry name" value="Gly-tRNA-synth_bsu"/>
</dbReference>
<dbReference type="InterPro" id="IPR006194">
    <property type="entry name" value="Gly-tRNA-synth_heterodimer"/>
</dbReference>
<dbReference type="InterPro" id="IPR009080">
    <property type="entry name" value="tRNAsynth_Ia_anticodon-bd"/>
</dbReference>
<dbReference type="NCBIfam" id="TIGR00211">
    <property type="entry name" value="glyS"/>
    <property type="match status" value="1"/>
</dbReference>
<dbReference type="PANTHER" id="PTHR30075:SF2">
    <property type="entry name" value="GLYCINE--TRNA LIGASE, CHLOROPLASTIC_MITOCHONDRIAL 2"/>
    <property type="match status" value="1"/>
</dbReference>
<dbReference type="PANTHER" id="PTHR30075">
    <property type="entry name" value="GLYCYL-TRNA SYNTHETASE"/>
    <property type="match status" value="1"/>
</dbReference>
<dbReference type="Pfam" id="PF05746">
    <property type="entry name" value="DALR_1"/>
    <property type="match status" value="1"/>
</dbReference>
<dbReference type="Pfam" id="PF02092">
    <property type="entry name" value="tRNA_synt_2f"/>
    <property type="match status" value="1"/>
</dbReference>
<dbReference type="PRINTS" id="PR01045">
    <property type="entry name" value="TRNASYNTHGB"/>
</dbReference>
<dbReference type="SUPFAM" id="SSF47323">
    <property type="entry name" value="Anticodon-binding domain of a subclass of class I aminoacyl-tRNA synthetases"/>
    <property type="match status" value="1"/>
</dbReference>
<dbReference type="SUPFAM" id="SSF109604">
    <property type="entry name" value="HD-domain/PDEase-like"/>
    <property type="match status" value="1"/>
</dbReference>
<dbReference type="PROSITE" id="PS50861">
    <property type="entry name" value="AA_TRNA_LIGASE_II_GLYAB"/>
    <property type="match status" value="1"/>
</dbReference>
<gene>
    <name type="primary">glyS</name>
    <name type="ordered locus">TM_0217</name>
</gene>